<keyword id="KW-0450">Lipoyl</keyword>
<keyword id="KW-1185">Reference proteome</keyword>
<proteinExistence type="inferred from homology"/>
<sequence length="140" mass="15623">MEVPGDRFYTKTHEWVKISENRAIIGITSYAIEQLGDITFLEVKPKGTLIKKGEVLGVVESSKTTEKIYAPVSGEIVEINRDCGVVEEGSSEVPIGLEKIVEDPYEEGWIVVLEVKGDLSSELRDLMSSEDYLKHLKEGH</sequence>
<gene>
    <name evidence="1" type="primary">gcvH</name>
    <name type="ordered locus">Kcr_1428</name>
</gene>
<feature type="chain" id="PRO_1000114525" description="Probable glycine cleavage system H protein">
    <location>
        <begin position="1"/>
        <end position="140"/>
    </location>
</feature>
<feature type="domain" description="Lipoyl-binding" evidence="2">
    <location>
        <begin position="22"/>
        <end position="114"/>
    </location>
</feature>
<feature type="modified residue" description="N6-lipoyllysine" evidence="1">
    <location>
        <position position="63"/>
    </location>
</feature>
<organism>
    <name type="scientific">Korarchaeum cryptofilum (strain OPF8)</name>
    <dbReference type="NCBI Taxonomy" id="374847"/>
    <lineage>
        <taxon>Archaea</taxon>
        <taxon>Thermoproteota</taxon>
        <taxon>Candidatus Korarchaeia</taxon>
        <taxon>Candidatus Korarchaeales</taxon>
        <taxon>Candidatus Korarchaeaceae</taxon>
        <taxon>Candidatus Korarchaeum</taxon>
    </lineage>
</organism>
<reference key="1">
    <citation type="journal article" date="2008" name="Proc. Natl. Acad. Sci. U.S.A.">
        <title>A korarchaeal genome reveals new insights into the evolution of the Archaea.</title>
        <authorList>
            <person name="Elkins J.G."/>
            <person name="Podar M."/>
            <person name="Graham D.E."/>
            <person name="Makarova K.S."/>
            <person name="Wolf Y."/>
            <person name="Randau L."/>
            <person name="Hedlund B.P."/>
            <person name="Brochier-Armanet C."/>
            <person name="Kunin V."/>
            <person name="Anderson I."/>
            <person name="Lapidus A."/>
            <person name="Goltsman E."/>
            <person name="Barry K."/>
            <person name="Koonin E.V."/>
            <person name="Hugenholtz P."/>
            <person name="Kyrpides N."/>
            <person name="Wanner G."/>
            <person name="Richardson P."/>
            <person name="Keller M."/>
            <person name="Stetter K.O."/>
        </authorList>
    </citation>
    <scope>NUCLEOTIDE SEQUENCE [LARGE SCALE GENOMIC DNA]</scope>
    <source>
        <strain>OPF8</strain>
    </source>
</reference>
<name>GCSH_KORCO</name>
<protein>
    <recommendedName>
        <fullName evidence="1">Probable glycine cleavage system H protein</fullName>
    </recommendedName>
</protein>
<evidence type="ECO:0000255" key="1">
    <source>
        <dbReference type="HAMAP-Rule" id="MF_00272"/>
    </source>
</evidence>
<evidence type="ECO:0000255" key="2">
    <source>
        <dbReference type="PROSITE-ProRule" id="PRU01066"/>
    </source>
</evidence>
<dbReference type="EMBL" id="CP000968">
    <property type="protein sequence ID" value="ACB08174.1"/>
    <property type="molecule type" value="Genomic_DNA"/>
</dbReference>
<dbReference type="RefSeq" id="WP_012310071.1">
    <property type="nucleotide sequence ID" value="NC_010482.1"/>
</dbReference>
<dbReference type="SMR" id="B1L6U5"/>
<dbReference type="FunCoup" id="B1L6U5">
    <property type="interactions" value="102"/>
</dbReference>
<dbReference type="STRING" id="374847.Kcr_1428"/>
<dbReference type="EnsemblBacteria" id="ACB08174">
    <property type="protein sequence ID" value="ACB08174"/>
    <property type="gene ID" value="Kcr_1428"/>
</dbReference>
<dbReference type="GeneID" id="6094705"/>
<dbReference type="KEGG" id="kcr:Kcr_1428"/>
<dbReference type="eggNOG" id="arCOG01303">
    <property type="taxonomic scope" value="Archaea"/>
</dbReference>
<dbReference type="HOGENOM" id="CLU_097408_2_0_2"/>
<dbReference type="InParanoid" id="B1L6U5"/>
<dbReference type="OrthoDB" id="9810at2157"/>
<dbReference type="PhylomeDB" id="B1L6U5"/>
<dbReference type="Proteomes" id="UP000001686">
    <property type="component" value="Chromosome"/>
</dbReference>
<dbReference type="GO" id="GO:0005960">
    <property type="term" value="C:glycine cleavage complex"/>
    <property type="evidence" value="ECO:0007669"/>
    <property type="project" value="InterPro"/>
</dbReference>
<dbReference type="GO" id="GO:0019464">
    <property type="term" value="P:glycine decarboxylation via glycine cleavage system"/>
    <property type="evidence" value="ECO:0007669"/>
    <property type="project" value="UniProtKB-UniRule"/>
</dbReference>
<dbReference type="CDD" id="cd06848">
    <property type="entry name" value="GCS_H"/>
    <property type="match status" value="1"/>
</dbReference>
<dbReference type="Gene3D" id="2.40.50.100">
    <property type="match status" value="1"/>
</dbReference>
<dbReference type="HAMAP" id="MF_00272">
    <property type="entry name" value="GcvH"/>
    <property type="match status" value="1"/>
</dbReference>
<dbReference type="InterPro" id="IPR003016">
    <property type="entry name" value="2-oxoA_DH_lipoyl-BS"/>
</dbReference>
<dbReference type="InterPro" id="IPR000089">
    <property type="entry name" value="Biotin_lipoyl"/>
</dbReference>
<dbReference type="InterPro" id="IPR002930">
    <property type="entry name" value="GCV_H"/>
</dbReference>
<dbReference type="InterPro" id="IPR033753">
    <property type="entry name" value="GCV_H/Fam206"/>
</dbReference>
<dbReference type="InterPro" id="IPR011053">
    <property type="entry name" value="Single_hybrid_motif"/>
</dbReference>
<dbReference type="NCBIfam" id="NF002270">
    <property type="entry name" value="PRK01202.1"/>
    <property type="match status" value="1"/>
</dbReference>
<dbReference type="PANTHER" id="PTHR11715">
    <property type="entry name" value="GLYCINE CLEAVAGE SYSTEM H PROTEIN"/>
    <property type="match status" value="1"/>
</dbReference>
<dbReference type="PANTHER" id="PTHR11715:SF3">
    <property type="entry name" value="GLYCINE CLEAVAGE SYSTEM H PROTEIN-RELATED"/>
    <property type="match status" value="1"/>
</dbReference>
<dbReference type="Pfam" id="PF01597">
    <property type="entry name" value="GCV_H"/>
    <property type="match status" value="1"/>
</dbReference>
<dbReference type="SUPFAM" id="SSF51230">
    <property type="entry name" value="Single hybrid motif"/>
    <property type="match status" value="1"/>
</dbReference>
<dbReference type="PROSITE" id="PS50968">
    <property type="entry name" value="BIOTINYL_LIPOYL"/>
    <property type="match status" value="1"/>
</dbReference>
<dbReference type="PROSITE" id="PS00189">
    <property type="entry name" value="LIPOYL"/>
    <property type="match status" value="1"/>
</dbReference>
<comment type="function">
    <text evidence="1">The glycine cleavage system catalyzes the degradation of glycine. The H protein shuttles the methylamine group of glycine from the P protein to the T protein.</text>
</comment>
<comment type="cofactor">
    <cofactor evidence="1">
        <name>(R)-lipoate</name>
        <dbReference type="ChEBI" id="CHEBI:83088"/>
    </cofactor>
    <text evidence="1">Binds 1 lipoyl cofactor covalently.</text>
</comment>
<comment type="subunit">
    <text evidence="1">The glycine cleavage system is composed of four proteins: P, T, L and H.</text>
</comment>
<comment type="similarity">
    <text evidence="1">Belongs to the GcvH family.</text>
</comment>
<accession>B1L6U5</accession>